<evidence type="ECO:0000255" key="1">
    <source>
        <dbReference type="HAMAP-Rule" id="MF_00129"/>
    </source>
</evidence>
<evidence type="ECO:0000256" key="2">
    <source>
        <dbReference type="SAM" id="MobiDB-lite"/>
    </source>
</evidence>
<gene>
    <name evidence="1" type="primary">mnmG</name>
    <name evidence="1" type="synonym">gidA</name>
    <name type="ordered locus">Bamb_0084</name>
</gene>
<feature type="chain" id="PRO_1000016562" description="tRNA uridine 5-carboxymethylaminomethyl modification enzyme MnmG">
    <location>
        <begin position="1"/>
        <end position="656"/>
    </location>
</feature>
<feature type="region of interest" description="Disordered" evidence="2">
    <location>
        <begin position="636"/>
        <end position="656"/>
    </location>
</feature>
<feature type="binding site" evidence="1">
    <location>
        <begin position="13"/>
        <end position="18"/>
    </location>
    <ligand>
        <name>FAD</name>
        <dbReference type="ChEBI" id="CHEBI:57692"/>
    </ligand>
</feature>
<feature type="binding site" evidence="1">
    <location>
        <begin position="274"/>
        <end position="288"/>
    </location>
    <ligand>
        <name>NAD(+)</name>
        <dbReference type="ChEBI" id="CHEBI:57540"/>
    </ligand>
</feature>
<keyword id="KW-0963">Cytoplasm</keyword>
<keyword id="KW-0274">FAD</keyword>
<keyword id="KW-0285">Flavoprotein</keyword>
<keyword id="KW-0520">NAD</keyword>
<keyword id="KW-0819">tRNA processing</keyword>
<comment type="function">
    <text evidence="1">NAD-binding protein involved in the addition of a carboxymethylaminomethyl (cmnm) group at the wobble position (U34) of certain tRNAs, forming tRNA-cmnm(5)s(2)U34.</text>
</comment>
<comment type="cofactor">
    <cofactor evidence="1">
        <name>FAD</name>
        <dbReference type="ChEBI" id="CHEBI:57692"/>
    </cofactor>
</comment>
<comment type="subunit">
    <text evidence="1">Homodimer. Heterotetramer of two MnmE and two MnmG subunits.</text>
</comment>
<comment type="subcellular location">
    <subcellularLocation>
        <location evidence="1">Cytoplasm</location>
    </subcellularLocation>
</comment>
<comment type="similarity">
    <text evidence="1">Belongs to the MnmG family.</text>
</comment>
<accession>Q0BJM8</accession>
<dbReference type="EMBL" id="CP000440">
    <property type="protein sequence ID" value="ABI85645.1"/>
    <property type="molecule type" value="Genomic_DNA"/>
</dbReference>
<dbReference type="RefSeq" id="WP_011655611.1">
    <property type="nucleotide sequence ID" value="NC_008390.1"/>
</dbReference>
<dbReference type="SMR" id="Q0BJM8"/>
<dbReference type="GeneID" id="93084507"/>
<dbReference type="KEGG" id="bam:Bamb_0084"/>
<dbReference type="PATRIC" id="fig|339670.21.peg.1549"/>
<dbReference type="eggNOG" id="COG0445">
    <property type="taxonomic scope" value="Bacteria"/>
</dbReference>
<dbReference type="Proteomes" id="UP000000662">
    <property type="component" value="Chromosome 1"/>
</dbReference>
<dbReference type="GO" id="GO:0005829">
    <property type="term" value="C:cytosol"/>
    <property type="evidence" value="ECO:0007669"/>
    <property type="project" value="TreeGrafter"/>
</dbReference>
<dbReference type="GO" id="GO:0050660">
    <property type="term" value="F:flavin adenine dinucleotide binding"/>
    <property type="evidence" value="ECO:0007669"/>
    <property type="project" value="UniProtKB-UniRule"/>
</dbReference>
<dbReference type="GO" id="GO:0030488">
    <property type="term" value="P:tRNA methylation"/>
    <property type="evidence" value="ECO:0007669"/>
    <property type="project" value="TreeGrafter"/>
</dbReference>
<dbReference type="GO" id="GO:0002098">
    <property type="term" value="P:tRNA wobble uridine modification"/>
    <property type="evidence" value="ECO:0007669"/>
    <property type="project" value="InterPro"/>
</dbReference>
<dbReference type="FunFam" id="1.10.10.1800:FF:000001">
    <property type="entry name" value="tRNA uridine 5-carboxymethylaminomethyl modification enzyme MnmG"/>
    <property type="match status" value="1"/>
</dbReference>
<dbReference type="FunFam" id="1.10.150.570:FF:000001">
    <property type="entry name" value="tRNA uridine 5-carboxymethylaminomethyl modification enzyme MnmG"/>
    <property type="match status" value="1"/>
</dbReference>
<dbReference type="FunFam" id="3.50.50.60:FF:000002">
    <property type="entry name" value="tRNA uridine 5-carboxymethylaminomethyl modification enzyme MnmG"/>
    <property type="match status" value="1"/>
</dbReference>
<dbReference type="FunFam" id="3.50.50.60:FF:000010">
    <property type="entry name" value="tRNA uridine 5-carboxymethylaminomethyl modification enzyme MnmG"/>
    <property type="match status" value="1"/>
</dbReference>
<dbReference type="Gene3D" id="3.50.50.60">
    <property type="entry name" value="FAD/NAD(P)-binding domain"/>
    <property type="match status" value="2"/>
</dbReference>
<dbReference type="Gene3D" id="1.10.150.570">
    <property type="entry name" value="GidA associated domain, C-terminal subdomain"/>
    <property type="match status" value="1"/>
</dbReference>
<dbReference type="Gene3D" id="1.10.10.1800">
    <property type="entry name" value="tRNA uridine 5-carboxymethylaminomethyl modification enzyme MnmG/GidA"/>
    <property type="match status" value="1"/>
</dbReference>
<dbReference type="HAMAP" id="MF_00129">
    <property type="entry name" value="MnmG_GidA"/>
    <property type="match status" value="1"/>
</dbReference>
<dbReference type="InterPro" id="IPR036188">
    <property type="entry name" value="FAD/NAD-bd_sf"/>
</dbReference>
<dbReference type="InterPro" id="IPR049312">
    <property type="entry name" value="GIDA_C_N"/>
</dbReference>
<dbReference type="InterPro" id="IPR004416">
    <property type="entry name" value="MnmG"/>
</dbReference>
<dbReference type="InterPro" id="IPR002218">
    <property type="entry name" value="MnmG-rel"/>
</dbReference>
<dbReference type="InterPro" id="IPR020595">
    <property type="entry name" value="MnmG-rel_CS"/>
</dbReference>
<dbReference type="InterPro" id="IPR026904">
    <property type="entry name" value="MnmG_C"/>
</dbReference>
<dbReference type="InterPro" id="IPR047001">
    <property type="entry name" value="MnmG_C_subdom"/>
</dbReference>
<dbReference type="InterPro" id="IPR044920">
    <property type="entry name" value="MnmG_C_subdom_sf"/>
</dbReference>
<dbReference type="InterPro" id="IPR040131">
    <property type="entry name" value="MnmG_N"/>
</dbReference>
<dbReference type="NCBIfam" id="TIGR00136">
    <property type="entry name" value="mnmG_gidA"/>
    <property type="match status" value="1"/>
</dbReference>
<dbReference type="PANTHER" id="PTHR11806">
    <property type="entry name" value="GLUCOSE INHIBITED DIVISION PROTEIN A"/>
    <property type="match status" value="1"/>
</dbReference>
<dbReference type="PANTHER" id="PTHR11806:SF0">
    <property type="entry name" value="PROTEIN MTO1 HOMOLOG, MITOCHONDRIAL"/>
    <property type="match status" value="1"/>
</dbReference>
<dbReference type="Pfam" id="PF01134">
    <property type="entry name" value="GIDA"/>
    <property type="match status" value="1"/>
</dbReference>
<dbReference type="Pfam" id="PF21680">
    <property type="entry name" value="GIDA_C_1st"/>
    <property type="match status" value="1"/>
</dbReference>
<dbReference type="Pfam" id="PF13932">
    <property type="entry name" value="SAM_GIDA_C"/>
    <property type="match status" value="1"/>
</dbReference>
<dbReference type="SMART" id="SM01228">
    <property type="entry name" value="GIDA_assoc_3"/>
    <property type="match status" value="1"/>
</dbReference>
<dbReference type="SUPFAM" id="SSF51905">
    <property type="entry name" value="FAD/NAD(P)-binding domain"/>
    <property type="match status" value="1"/>
</dbReference>
<dbReference type="PROSITE" id="PS01280">
    <property type="entry name" value="GIDA_1"/>
    <property type="match status" value="1"/>
</dbReference>
<dbReference type="PROSITE" id="PS01281">
    <property type="entry name" value="GIDA_2"/>
    <property type="match status" value="1"/>
</dbReference>
<reference key="1">
    <citation type="submission" date="2006-08" db="EMBL/GenBank/DDBJ databases">
        <title>Complete sequence of chromosome 1 of Burkholderia cepacia AMMD.</title>
        <authorList>
            <person name="Copeland A."/>
            <person name="Lucas S."/>
            <person name="Lapidus A."/>
            <person name="Barry K."/>
            <person name="Detter J.C."/>
            <person name="Glavina del Rio T."/>
            <person name="Hammon N."/>
            <person name="Israni S."/>
            <person name="Pitluck S."/>
            <person name="Bruce D."/>
            <person name="Chain P."/>
            <person name="Malfatti S."/>
            <person name="Shin M."/>
            <person name="Vergez L."/>
            <person name="Schmutz J."/>
            <person name="Larimer F."/>
            <person name="Land M."/>
            <person name="Hauser L."/>
            <person name="Kyrpides N."/>
            <person name="Kim E."/>
            <person name="Parke J."/>
            <person name="Coenye T."/>
            <person name="Konstantinidis K."/>
            <person name="Ramette A."/>
            <person name="Tiedje J."/>
            <person name="Richardson P."/>
        </authorList>
    </citation>
    <scope>NUCLEOTIDE SEQUENCE [LARGE SCALE GENOMIC DNA]</scope>
    <source>
        <strain>ATCC BAA-244 / DSM 16087 / CCUG 44356 / LMG 19182 / AMMD</strain>
    </source>
</reference>
<name>MNMG_BURCM</name>
<protein>
    <recommendedName>
        <fullName evidence="1">tRNA uridine 5-carboxymethylaminomethyl modification enzyme MnmG</fullName>
    </recommendedName>
    <alternativeName>
        <fullName evidence="1">Glucose-inhibited division protein A</fullName>
    </alternativeName>
</protein>
<organism>
    <name type="scientific">Burkholderia ambifaria (strain ATCC BAA-244 / DSM 16087 / CCUG 44356 / LMG 19182 / AMMD)</name>
    <name type="common">Burkholderia cepacia (strain AMMD)</name>
    <dbReference type="NCBI Taxonomy" id="339670"/>
    <lineage>
        <taxon>Bacteria</taxon>
        <taxon>Pseudomonadati</taxon>
        <taxon>Pseudomonadota</taxon>
        <taxon>Betaproteobacteria</taxon>
        <taxon>Burkholderiales</taxon>
        <taxon>Burkholderiaceae</taxon>
        <taxon>Burkholderia</taxon>
        <taxon>Burkholderia cepacia complex</taxon>
    </lineage>
</organism>
<proteinExistence type="inferred from homology"/>
<sequence>MLFPTEFDVIVVGGGHAGTEAALASARMGAKTLLLTHNIETLGQMSCNPSIGGIGKGHLVKEVDALGGAMAAATDESGIQFRILNSSKGPAVRATRAQADRILYKAAIRHRLENQPNLWLFQQAVDDLMVEGDRVVGAVTQIGIRFRARAVVLTAGTFLDGKIHVGLNNYTGGRAGDPAAVSLSARLKELKLPQGRLKTGTPPRIDGRSIDFSKLDEQPGDLDPIPVFSFLGRAEQHPQQLPCWVTHTNERTHDIIRGGLDRSPMYTGVIEGVGPRYCPSIEDKIHRFASKESHQIFLEPEGLTTNEFYPNGISTSLPFDVQLELVHSMRGLENAHILRPGYAIEYDYFDPRALKASLETKAINGLFFAGQINGTTGYEEAAAQGLLAGLNAGRYVQEKDAWCPRRDQAYLGVLVDDLVTRGVAEPYRMFTSRAEYRLSLREDNADMRLTEIGRELGLVDDARWDAFSRKRDAVSRETERLKSTWVTPKTLPPEEATALLGKAIDHEYSLAELLRRPGISYDGVCSLKGGECAPTEPLADDPVLLEQIKEQVEIGIKYQGYIERQASEIERNDANENTRLPDGIDYREVRGLSFEVSQKLNEFRPETIGQASRISGVTPAAISLLMVHLKRRGLGRRNGTAAEATEQGDGTVPTQQ</sequence>